<dbReference type="EMBL" id="CP001336">
    <property type="protein sequence ID" value="ACL18790.1"/>
    <property type="molecule type" value="Genomic_DNA"/>
</dbReference>
<dbReference type="RefSeq" id="WP_015942984.1">
    <property type="nucleotide sequence ID" value="NC_011830.1"/>
</dbReference>
<dbReference type="SMR" id="B8FW04"/>
<dbReference type="KEGG" id="dhd:Dhaf_0726"/>
<dbReference type="HOGENOM" id="CLU_082184_2_2_9"/>
<dbReference type="Proteomes" id="UP000007726">
    <property type="component" value="Chromosome"/>
</dbReference>
<dbReference type="GO" id="GO:0022625">
    <property type="term" value="C:cytosolic large ribosomal subunit"/>
    <property type="evidence" value="ECO:0007669"/>
    <property type="project" value="TreeGrafter"/>
</dbReference>
<dbReference type="GO" id="GO:0003729">
    <property type="term" value="F:mRNA binding"/>
    <property type="evidence" value="ECO:0007669"/>
    <property type="project" value="TreeGrafter"/>
</dbReference>
<dbReference type="GO" id="GO:0003735">
    <property type="term" value="F:structural constituent of ribosome"/>
    <property type="evidence" value="ECO:0007669"/>
    <property type="project" value="InterPro"/>
</dbReference>
<dbReference type="GO" id="GO:0017148">
    <property type="term" value="P:negative regulation of translation"/>
    <property type="evidence" value="ECO:0007669"/>
    <property type="project" value="TreeGrafter"/>
</dbReference>
<dbReference type="GO" id="GO:0006412">
    <property type="term" value="P:translation"/>
    <property type="evidence" value="ECO:0007669"/>
    <property type="project" value="UniProtKB-UniRule"/>
</dbReference>
<dbReference type="CDD" id="cd00392">
    <property type="entry name" value="Ribosomal_L13"/>
    <property type="match status" value="1"/>
</dbReference>
<dbReference type="FunFam" id="3.90.1180.10:FF:000001">
    <property type="entry name" value="50S ribosomal protein L13"/>
    <property type="match status" value="1"/>
</dbReference>
<dbReference type="Gene3D" id="3.90.1180.10">
    <property type="entry name" value="Ribosomal protein L13"/>
    <property type="match status" value="1"/>
</dbReference>
<dbReference type="HAMAP" id="MF_01366">
    <property type="entry name" value="Ribosomal_uL13"/>
    <property type="match status" value="1"/>
</dbReference>
<dbReference type="InterPro" id="IPR005822">
    <property type="entry name" value="Ribosomal_uL13"/>
</dbReference>
<dbReference type="InterPro" id="IPR005823">
    <property type="entry name" value="Ribosomal_uL13_bac-type"/>
</dbReference>
<dbReference type="InterPro" id="IPR023563">
    <property type="entry name" value="Ribosomal_uL13_CS"/>
</dbReference>
<dbReference type="InterPro" id="IPR036899">
    <property type="entry name" value="Ribosomal_uL13_sf"/>
</dbReference>
<dbReference type="NCBIfam" id="TIGR01066">
    <property type="entry name" value="rplM_bact"/>
    <property type="match status" value="1"/>
</dbReference>
<dbReference type="PANTHER" id="PTHR11545:SF2">
    <property type="entry name" value="LARGE RIBOSOMAL SUBUNIT PROTEIN UL13M"/>
    <property type="match status" value="1"/>
</dbReference>
<dbReference type="PANTHER" id="PTHR11545">
    <property type="entry name" value="RIBOSOMAL PROTEIN L13"/>
    <property type="match status" value="1"/>
</dbReference>
<dbReference type="Pfam" id="PF00572">
    <property type="entry name" value="Ribosomal_L13"/>
    <property type="match status" value="1"/>
</dbReference>
<dbReference type="PIRSF" id="PIRSF002181">
    <property type="entry name" value="Ribosomal_L13"/>
    <property type="match status" value="1"/>
</dbReference>
<dbReference type="SUPFAM" id="SSF52161">
    <property type="entry name" value="Ribosomal protein L13"/>
    <property type="match status" value="1"/>
</dbReference>
<dbReference type="PROSITE" id="PS00783">
    <property type="entry name" value="RIBOSOMAL_L13"/>
    <property type="match status" value="1"/>
</dbReference>
<comment type="function">
    <text evidence="1">This protein is one of the early assembly proteins of the 50S ribosomal subunit, although it is not seen to bind rRNA by itself. It is important during the early stages of 50S assembly.</text>
</comment>
<comment type="subunit">
    <text evidence="1">Part of the 50S ribosomal subunit.</text>
</comment>
<comment type="similarity">
    <text evidence="1">Belongs to the universal ribosomal protein uL13 family.</text>
</comment>
<accession>B8FW04</accession>
<feature type="chain" id="PRO_1000166865" description="Large ribosomal subunit protein uL13">
    <location>
        <begin position="1"/>
        <end position="143"/>
    </location>
</feature>
<evidence type="ECO:0000255" key="1">
    <source>
        <dbReference type="HAMAP-Rule" id="MF_01366"/>
    </source>
</evidence>
<evidence type="ECO:0000305" key="2"/>
<sequence length="143" mass="16302">MSTFFAKANAVERKWYVIDAAGLPLGRLATEAARILRGKHKPTFTPNVDTGDHVIIINAEKVVLTGNKLDQKMYRRHSGYPGGLKETPYRKLMQNMPERAVEHAVKGMLPHNKLGAQMYTKLKVYRDENHPHQAQQPEVWTIQ</sequence>
<proteinExistence type="inferred from homology"/>
<name>RL13_DESHD</name>
<organism>
    <name type="scientific">Desulfitobacterium hafniense (strain DSM 10664 / DCB-2)</name>
    <dbReference type="NCBI Taxonomy" id="272564"/>
    <lineage>
        <taxon>Bacteria</taxon>
        <taxon>Bacillati</taxon>
        <taxon>Bacillota</taxon>
        <taxon>Clostridia</taxon>
        <taxon>Eubacteriales</taxon>
        <taxon>Desulfitobacteriaceae</taxon>
        <taxon>Desulfitobacterium</taxon>
    </lineage>
</organism>
<keyword id="KW-0687">Ribonucleoprotein</keyword>
<keyword id="KW-0689">Ribosomal protein</keyword>
<reference key="1">
    <citation type="journal article" date="2012" name="BMC Microbiol.">
        <title>Genome sequence of Desulfitobacterium hafniense DCB-2, a Gram-positive anaerobe capable of dehalogenation and metal reduction.</title>
        <authorList>
            <person name="Kim S.H."/>
            <person name="Harzman C."/>
            <person name="Davis J.K."/>
            <person name="Hutcheson R."/>
            <person name="Broderick J.B."/>
            <person name="Marsh T.L."/>
            <person name="Tiedje J.M."/>
        </authorList>
    </citation>
    <scope>NUCLEOTIDE SEQUENCE [LARGE SCALE GENOMIC DNA]</scope>
    <source>
        <strain>DSM 10664 / DCB-2</strain>
    </source>
</reference>
<gene>
    <name evidence="1" type="primary">rplM</name>
    <name type="ordered locus">Dhaf_0726</name>
</gene>
<protein>
    <recommendedName>
        <fullName evidence="1">Large ribosomal subunit protein uL13</fullName>
    </recommendedName>
    <alternativeName>
        <fullName evidence="2">50S ribosomal protein L13</fullName>
    </alternativeName>
</protein>